<comment type="function">
    <text evidence="1">Catalyzes the hydrolysis of glutamine to glutamate and ammonia as part of the biosynthesis of pyridoxal 5'-phosphate. The resulting ammonia molecule is channeled to the active site of PdxS.</text>
</comment>
<comment type="catalytic activity">
    <reaction evidence="1">
        <text>aldehydo-D-ribose 5-phosphate + D-glyceraldehyde 3-phosphate + L-glutamine = pyridoxal 5'-phosphate + L-glutamate + phosphate + 3 H2O + H(+)</text>
        <dbReference type="Rhea" id="RHEA:31507"/>
        <dbReference type="ChEBI" id="CHEBI:15377"/>
        <dbReference type="ChEBI" id="CHEBI:15378"/>
        <dbReference type="ChEBI" id="CHEBI:29985"/>
        <dbReference type="ChEBI" id="CHEBI:43474"/>
        <dbReference type="ChEBI" id="CHEBI:58273"/>
        <dbReference type="ChEBI" id="CHEBI:58359"/>
        <dbReference type="ChEBI" id="CHEBI:59776"/>
        <dbReference type="ChEBI" id="CHEBI:597326"/>
        <dbReference type="EC" id="4.3.3.6"/>
    </reaction>
</comment>
<comment type="catalytic activity">
    <reaction evidence="1">
        <text>L-glutamine + H2O = L-glutamate + NH4(+)</text>
        <dbReference type="Rhea" id="RHEA:15889"/>
        <dbReference type="ChEBI" id="CHEBI:15377"/>
        <dbReference type="ChEBI" id="CHEBI:28938"/>
        <dbReference type="ChEBI" id="CHEBI:29985"/>
        <dbReference type="ChEBI" id="CHEBI:58359"/>
        <dbReference type="EC" id="3.5.1.2"/>
    </reaction>
</comment>
<comment type="pathway">
    <text evidence="1">Cofactor biosynthesis; pyridoxal 5'-phosphate biosynthesis.</text>
</comment>
<comment type="subunit">
    <text evidence="1">In the presence of PdxS, forms a dodecamer of heterodimers. Only shows activity in the heterodimer.</text>
</comment>
<comment type="similarity">
    <text evidence="1">Belongs to the glutaminase PdxT/SNO family.</text>
</comment>
<sequence>MVKIGVLGLQGAVREHVKSVEASGAEAVVVKRIEQLEEIDGLILPGGESTTMRRLIDKYDFMEPLRTFAKSGKPMFGTCAGMILLAKTLIGYDEAHIGAMDITVERNAFGRQKDSFEAALSIKGVGEDFVGVFIRAPYVVDVADDVEVLSTHGDRMVAVKQGPFLAASFHPELTDDHRVTAYFVEMVKEAKMKKVV</sequence>
<proteinExistence type="inferred from homology"/>
<keyword id="KW-0315">Glutamine amidotransferase</keyword>
<keyword id="KW-0378">Hydrolase</keyword>
<keyword id="KW-0456">Lyase</keyword>
<keyword id="KW-0663">Pyridoxal phosphate</keyword>
<accession>C3P8Q4</accession>
<evidence type="ECO:0000255" key="1">
    <source>
        <dbReference type="HAMAP-Rule" id="MF_01615"/>
    </source>
</evidence>
<reference key="1">
    <citation type="submission" date="2009-04" db="EMBL/GenBank/DDBJ databases">
        <title>Genome sequence of Bacillus anthracis A0248.</title>
        <authorList>
            <person name="Dodson R.J."/>
            <person name="Munk A.C."/>
            <person name="Bruce D."/>
            <person name="Detter C."/>
            <person name="Tapia R."/>
            <person name="Sutton G."/>
            <person name="Sims D."/>
            <person name="Brettin T."/>
        </authorList>
    </citation>
    <scope>NUCLEOTIDE SEQUENCE [LARGE SCALE GENOMIC DNA]</scope>
    <source>
        <strain>A0248</strain>
    </source>
</reference>
<protein>
    <recommendedName>
        <fullName evidence="1">Pyridoxal 5'-phosphate synthase subunit PdxT</fullName>
        <ecNumber evidence="1">4.3.3.6</ecNumber>
    </recommendedName>
    <alternativeName>
        <fullName evidence="1">Pdx2</fullName>
    </alternativeName>
    <alternativeName>
        <fullName evidence="1">Pyridoxal 5'-phosphate synthase glutaminase subunit</fullName>
        <ecNumber evidence="1">3.5.1.2</ecNumber>
    </alternativeName>
</protein>
<gene>
    <name evidence="1" type="primary">pdxT</name>
    <name type="ordered locus">BAA_0017</name>
</gene>
<organism>
    <name type="scientific">Bacillus anthracis (strain A0248)</name>
    <dbReference type="NCBI Taxonomy" id="592021"/>
    <lineage>
        <taxon>Bacteria</taxon>
        <taxon>Bacillati</taxon>
        <taxon>Bacillota</taxon>
        <taxon>Bacilli</taxon>
        <taxon>Bacillales</taxon>
        <taxon>Bacillaceae</taxon>
        <taxon>Bacillus</taxon>
        <taxon>Bacillus cereus group</taxon>
    </lineage>
</organism>
<name>PDXT_BACAA</name>
<feature type="chain" id="PRO_1000185870" description="Pyridoxal 5'-phosphate synthase subunit PdxT">
    <location>
        <begin position="1"/>
        <end position="196"/>
    </location>
</feature>
<feature type="active site" description="Nucleophile" evidence="1">
    <location>
        <position position="79"/>
    </location>
</feature>
<feature type="active site" description="Charge relay system" evidence="1">
    <location>
        <position position="170"/>
    </location>
</feature>
<feature type="active site" description="Charge relay system" evidence="1">
    <location>
        <position position="172"/>
    </location>
</feature>
<feature type="binding site" evidence="1">
    <location>
        <begin position="47"/>
        <end position="49"/>
    </location>
    <ligand>
        <name>L-glutamine</name>
        <dbReference type="ChEBI" id="CHEBI:58359"/>
    </ligand>
</feature>
<feature type="binding site" evidence="1">
    <location>
        <position position="106"/>
    </location>
    <ligand>
        <name>L-glutamine</name>
        <dbReference type="ChEBI" id="CHEBI:58359"/>
    </ligand>
</feature>
<feature type="binding site" evidence="1">
    <location>
        <begin position="134"/>
        <end position="135"/>
    </location>
    <ligand>
        <name>L-glutamine</name>
        <dbReference type="ChEBI" id="CHEBI:58359"/>
    </ligand>
</feature>
<dbReference type="EC" id="4.3.3.6" evidence="1"/>
<dbReference type="EC" id="3.5.1.2" evidence="1"/>
<dbReference type="EMBL" id="CP001598">
    <property type="protein sequence ID" value="ACQ50665.1"/>
    <property type="molecule type" value="Genomic_DNA"/>
</dbReference>
<dbReference type="RefSeq" id="WP_000238798.1">
    <property type="nucleotide sequence ID" value="NC_012659.1"/>
</dbReference>
<dbReference type="SMR" id="C3P8Q4"/>
<dbReference type="MEROPS" id="C26.A32"/>
<dbReference type="GeneID" id="45020050"/>
<dbReference type="KEGG" id="bai:BAA_0017"/>
<dbReference type="HOGENOM" id="CLU_069674_2_0_9"/>
<dbReference type="UniPathway" id="UPA00245"/>
<dbReference type="GO" id="GO:0005829">
    <property type="term" value="C:cytosol"/>
    <property type="evidence" value="ECO:0007669"/>
    <property type="project" value="TreeGrafter"/>
</dbReference>
<dbReference type="GO" id="GO:1903600">
    <property type="term" value="C:glutaminase complex"/>
    <property type="evidence" value="ECO:0007669"/>
    <property type="project" value="TreeGrafter"/>
</dbReference>
<dbReference type="GO" id="GO:0004359">
    <property type="term" value="F:glutaminase activity"/>
    <property type="evidence" value="ECO:0007669"/>
    <property type="project" value="UniProtKB-UniRule"/>
</dbReference>
<dbReference type="GO" id="GO:0036381">
    <property type="term" value="F:pyridoxal 5'-phosphate synthase (glutamine hydrolysing) activity"/>
    <property type="evidence" value="ECO:0007669"/>
    <property type="project" value="UniProtKB-UniRule"/>
</dbReference>
<dbReference type="GO" id="GO:0006543">
    <property type="term" value="P:glutamine catabolic process"/>
    <property type="evidence" value="ECO:0007669"/>
    <property type="project" value="UniProtKB-UniRule"/>
</dbReference>
<dbReference type="GO" id="GO:0042823">
    <property type="term" value="P:pyridoxal phosphate biosynthetic process"/>
    <property type="evidence" value="ECO:0007669"/>
    <property type="project" value="UniProtKB-UniRule"/>
</dbReference>
<dbReference type="GO" id="GO:0008614">
    <property type="term" value="P:pyridoxine metabolic process"/>
    <property type="evidence" value="ECO:0007669"/>
    <property type="project" value="TreeGrafter"/>
</dbReference>
<dbReference type="CDD" id="cd01749">
    <property type="entry name" value="GATase1_PB"/>
    <property type="match status" value="1"/>
</dbReference>
<dbReference type="FunFam" id="3.40.50.880:FF:000010">
    <property type="entry name" value="uncharacterized protein LOC100176842 isoform X2"/>
    <property type="match status" value="1"/>
</dbReference>
<dbReference type="Gene3D" id="3.40.50.880">
    <property type="match status" value="1"/>
</dbReference>
<dbReference type="HAMAP" id="MF_01615">
    <property type="entry name" value="PdxT"/>
    <property type="match status" value="1"/>
</dbReference>
<dbReference type="InterPro" id="IPR029062">
    <property type="entry name" value="Class_I_gatase-like"/>
</dbReference>
<dbReference type="InterPro" id="IPR002161">
    <property type="entry name" value="PdxT/SNO"/>
</dbReference>
<dbReference type="InterPro" id="IPR021196">
    <property type="entry name" value="PdxT/SNO_CS"/>
</dbReference>
<dbReference type="NCBIfam" id="TIGR03800">
    <property type="entry name" value="PLP_synth_Pdx2"/>
    <property type="match status" value="1"/>
</dbReference>
<dbReference type="PANTHER" id="PTHR31559">
    <property type="entry name" value="PYRIDOXAL 5'-PHOSPHATE SYNTHASE SUBUNIT SNO"/>
    <property type="match status" value="1"/>
</dbReference>
<dbReference type="PANTHER" id="PTHR31559:SF0">
    <property type="entry name" value="PYRIDOXAL 5'-PHOSPHATE SYNTHASE SUBUNIT SNO1-RELATED"/>
    <property type="match status" value="1"/>
</dbReference>
<dbReference type="Pfam" id="PF01174">
    <property type="entry name" value="SNO"/>
    <property type="match status" value="1"/>
</dbReference>
<dbReference type="PIRSF" id="PIRSF005639">
    <property type="entry name" value="Glut_amidoT_SNO"/>
    <property type="match status" value="1"/>
</dbReference>
<dbReference type="SUPFAM" id="SSF52317">
    <property type="entry name" value="Class I glutamine amidotransferase-like"/>
    <property type="match status" value="1"/>
</dbReference>
<dbReference type="PROSITE" id="PS01236">
    <property type="entry name" value="PDXT_SNO_1"/>
    <property type="match status" value="1"/>
</dbReference>
<dbReference type="PROSITE" id="PS51130">
    <property type="entry name" value="PDXT_SNO_2"/>
    <property type="match status" value="1"/>
</dbReference>